<evidence type="ECO:0000256" key="1">
    <source>
        <dbReference type="SAM" id="MobiDB-lite"/>
    </source>
</evidence>
<evidence type="ECO:0000303" key="2">
    <source>
    </source>
</evidence>
<evidence type="ECO:0000305" key="3"/>
<name>KLC_STRPU</name>
<proteinExistence type="evidence at transcript level"/>
<organism>
    <name type="scientific">Strongylocentrotus purpuratus</name>
    <name type="common">Purple sea urchin</name>
    <dbReference type="NCBI Taxonomy" id="7668"/>
    <lineage>
        <taxon>Eukaryota</taxon>
        <taxon>Metazoa</taxon>
        <taxon>Echinodermata</taxon>
        <taxon>Eleutherozoa</taxon>
        <taxon>Echinozoa</taxon>
        <taxon>Echinoidea</taxon>
        <taxon>Euechinoidea</taxon>
        <taxon>Echinacea</taxon>
        <taxon>Camarodonta</taxon>
        <taxon>Echinidea</taxon>
        <taxon>Strongylocentrotidae</taxon>
        <taxon>Strongylocentrotus</taxon>
    </lineage>
</organism>
<reference key="1">
    <citation type="journal article" date="1993" name="J. Mol. Biol.">
        <title>Sequences of sea urchin kinesin light chain isoforms.</title>
        <authorList>
            <person name="Wedaman K.P."/>
            <person name="Knight A.E."/>
            <person name="Kendrick-Jones J."/>
            <person name="Scholey J.M."/>
        </authorList>
    </citation>
    <scope>NUCLEOTIDE SEQUENCE [MRNA] (ISOFORMS KLC-1; KLC-2; KLC-3 AND KLC-4)</scope>
    <source>
        <tissue>Egg</tissue>
    </source>
</reference>
<accession>Q05090</accession>
<accession>Q04801</accession>
<accession>Q05088</accession>
<accession>Q05089</accession>
<protein>
    <recommendedName>
        <fullName>Kinesin light chain</fullName>
        <shortName>KLC</shortName>
    </recommendedName>
</protein>
<dbReference type="EMBL" id="L10235">
    <property type="protein sequence ID" value="AAA03059.1"/>
    <property type="molecule type" value="mRNA"/>
</dbReference>
<dbReference type="EMBL" id="L10234">
    <property type="protein sequence ID" value="AAA03058.1"/>
    <property type="molecule type" value="mRNA"/>
</dbReference>
<dbReference type="EMBL" id="L10233">
    <property type="protein sequence ID" value="AAA03057.1"/>
    <property type="molecule type" value="mRNA"/>
</dbReference>
<dbReference type="EMBL" id="L08258">
    <property type="protein sequence ID" value="AAA03060.1"/>
    <property type="molecule type" value="mRNA"/>
</dbReference>
<dbReference type="PIR" id="S33813">
    <property type="entry name" value="S33813"/>
</dbReference>
<dbReference type="PIR" id="S33814">
    <property type="entry name" value="S33814"/>
</dbReference>
<dbReference type="PIR" id="S33815">
    <property type="entry name" value="S33815"/>
</dbReference>
<dbReference type="PIR" id="S33816">
    <property type="entry name" value="S33816"/>
</dbReference>
<dbReference type="RefSeq" id="NP_999735.1">
    <molecule id="Q05090-4"/>
    <property type="nucleotide sequence ID" value="NM_214570.2"/>
</dbReference>
<dbReference type="RefSeq" id="NP_999736.1">
    <molecule id="Q05090-1"/>
    <property type="nucleotide sequence ID" value="NM_214571.1"/>
</dbReference>
<dbReference type="RefSeq" id="NP_999737.1">
    <molecule id="Q05090-3"/>
    <property type="nucleotide sequence ID" value="NM_214572.1"/>
</dbReference>
<dbReference type="RefSeq" id="NP_999738.1">
    <molecule id="Q05090-2"/>
    <property type="nucleotide sequence ID" value="NM_214573.1"/>
</dbReference>
<dbReference type="RefSeq" id="XP_011674949.1">
    <property type="nucleotide sequence ID" value="XM_011676647.1"/>
</dbReference>
<dbReference type="RefSeq" id="XP_011674951.1">
    <property type="nucleotide sequence ID" value="XM_011676649.1"/>
</dbReference>
<dbReference type="RefSeq" id="XP_011674955.1">
    <property type="nucleotide sequence ID" value="XM_011676653.1"/>
</dbReference>
<dbReference type="RefSeq" id="XP_030854137.1">
    <molecule id="Q05090-1"/>
    <property type="nucleotide sequence ID" value="XM_030998277.1"/>
</dbReference>
<dbReference type="RefSeq" id="XP_030854139.1">
    <molecule id="Q05090-3"/>
    <property type="nucleotide sequence ID" value="XM_030998279.1"/>
</dbReference>
<dbReference type="RefSeq" id="XP_030854144.1">
    <molecule id="Q05090-2"/>
    <property type="nucleotide sequence ID" value="XM_030998284.1"/>
</dbReference>
<dbReference type="RefSeq" id="XP_030855289.1">
    <molecule id="Q05090-1"/>
    <property type="nucleotide sequence ID" value="XM_030999429.1"/>
</dbReference>
<dbReference type="RefSeq" id="XP_030855291.1">
    <molecule id="Q05090-3"/>
    <property type="nucleotide sequence ID" value="XM_030999431.1"/>
</dbReference>
<dbReference type="RefSeq" id="XP_030855296.1">
    <molecule id="Q05090-2"/>
    <property type="nucleotide sequence ID" value="XM_030999436.1"/>
</dbReference>
<dbReference type="SMR" id="Q05090"/>
<dbReference type="STRING" id="7668.Q05090"/>
<dbReference type="EnsemblMetazoa" id="NM_214570">
    <molecule id="Q05090-4"/>
    <property type="protein sequence ID" value="NP_999735"/>
    <property type="gene ID" value="LOC373373"/>
</dbReference>
<dbReference type="EnsemblMetazoa" id="NM_214571">
    <molecule id="Q05090-1"/>
    <property type="protein sequence ID" value="NP_999736"/>
    <property type="gene ID" value="LOC373373"/>
</dbReference>
<dbReference type="EnsemblMetazoa" id="NM_214572">
    <molecule id="Q05090-3"/>
    <property type="protein sequence ID" value="NP_999737"/>
    <property type="gene ID" value="LOC373373"/>
</dbReference>
<dbReference type="EnsemblMetazoa" id="NM_214573">
    <molecule id="Q05090-2"/>
    <property type="protein sequence ID" value="NP_999738"/>
    <property type="gene ID" value="LOC373373"/>
</dbReference>
<dbReference type="EnsemblMetazoa" id="XM_030998277">
    <molecule id="Q05090-1"/>
    <property type="protein sequence ID" value="XP_030854137"/>
    <property type="gene ID" value="LOC373373"/>
</dbReference>
<dbReference type="EnsemblMetazoa" id="XM_030998279">
    <molecule id="Q05090-3"/>
    <property type="protein sequence ID" value="XP_030854139"/>
    <property type="gene ID" value="LOC373373"/>
</dbReference>
<dbReference type="EnsemblMetazoa" id="XM_030998284">
    <molecule id="Q05090-2"/>
    <property type="protein sequence ID" value="XP_030854144"/>
    <property type="gene ID" value="LOC373373"/>
</dbReference>
<dbReference type="EnsemblMetazoa" id="XM_030999429">
    <molecule id="Q05090-1"/>
    <property type="protein sequence ID" value="XP_030855289"/>
    <property type="gene ID" value="LOC105446921"/>
</dbReference>
<dbReference type="EnsemblMetazoa" id="XM_030999431">
    <molecule id="Q05090-3"/>
    <property type="protein sequence ID" value="XP_030855291"/>
    <property type="gene ID" value="LOC105446921"/>
</dbReference>
<dbReference type="EnsemblMetazoa" id="XM_030999436">
    <molecule id="Q05090-2"/>
    <property type="protein sequence ID" value="XP_030855296"/>
    <property type="gene ID" value="LOC105446921"/>
</dbReference>
<dbReference type="GeneID" id="105446921"/>
<dbReference type="GeneID" id="373373"/>
<dbReference type="KEGG" id="spu:373373"/>
<dbReference type="eggNOG" id="KOG1840">
    <property type="taxonomic scope" value="Eukaryota"/>
</dbReference>
<dbReference type="HOGENOM" id="CLU_019953_0_0_1"/>
<dbReference type="InParanoid" id="Q05090"/>
<dbReference type="OrthoDB" id="413723at2759"/>
<dbReference type="PhylomeDB" id="Q05090"/>
<dbReference type="Proteomes" id="UP000007110">
    <property type="component" value="Unassembled WGS sequence"/>
</dbReference>
<dbReference type="GO" id="GO:0005737">
    <property type="term" value="C:cytoplasm"/>
    <property type="evidence" value="ECO:0000318"/>
    <property type="project" value="GO_Central"/>
</dbReference>
<dbReference type="GO" id="GO:0005871">
    <property type="term" value="C:kinesin complex"/>
    <property type="evidence" value="ECO:0007669"/>
    <property type="project" value="InterPro"/>
</dbReference>
<dbReference type="GO" id="GO:0005874">
    <property type="term" value="C:microtubule"/>
    <property type="evidence" value="ECO:0007669"/>
    <property type="project" value="UniProtKB-KW"/>
</dbReference>
<dbReference type="GO" id="GO:0019894">
    <property type="term" value="F:kinesin binding"/>
    <property type="evidence" value="ECO:0000318"/>
    <property type="project" value="GO_Central"/>
</dbReference>
<dbReference type="GO" id="GO:0007018">
    <property type="term" value="P:microtubule-based movement"/>
    <property type="evidence" value="ECO:0000318"/>
    <property type="project" value="GO_Central"/>
</dbReference>
<dbReference type="FunFam" id="1.25.40.10:FF:000003">
    <property type="entry name" value="kinesin light chain isoform X1"/>
    <property type="match status" value="1"/>
</dbReference>
<dbReference type="Gene3D" id="1.25.40.10">
    <property type="entry name" value="Tetratricopeptide repeat domain"/>
    <property type="match status" value="1"/>
</dbReference>
<dbReference type="InterPro" id="IPR002151">
    <property type="entry name" value="Kinesin_light"/>
</dbReference>
<dbReference type="InterPro" id="IPR015792">
    <property type="entry name" value="Kinesin_light_repeat"/>
</dbReference>
<dbReference type="InterPro" id="IPR011990">
    <property type="entry name" value="TPR-like_helical_dom_sf"/>
</dbReference>
<dbReference type="InterPro" id="IPR019734">
    <property type="entry name" value="TPR_rpt"/>
</dbReference>
<dbReference type="PANTHER" id="PTHR45783">
    <property type="entry name" value="KINESIN LIGHT CHAIN"/>
    <property type="match status" value="1"/>
</dbReference>
<dbReference type="PANTHER" id="PTHR45783:SF3">
    <property type="entry name" value="KINESIN LIGHT CHAIN"/>
    <property type="match status" value="1"/>
</dbReference>
<dbReference type="Pfam" id="PF13374">
    <property type="entry name" value="TPR_10"/>
    <property type="match status" value="1"/>
</dbReference>
<dbReference type="Pfam" id="PF13424">
    <property type="entry name" value="TPR_12"/>
    <property type="match status" value="2"/>
</dbReference>
<dbReference type="PRINTS" id="PR00381">
    <property type="entry name" value="KINESINLIGHT"/>
</dbReference>
<dbReference type="SMART" id="SM00028">
    <property type="entry name" value="TPR"/>
    <property type="match status" value="5"/>
</dbReference>
<dbReference type="SUPFAM" id="SSF48452">
    <property type="entry name" value="TPR-like"/>
    <property type="match status" value="1"/>
</dbReference>
<dbReference type="PROSITE" id="PS01160">
    <property type="entry name" value="KINESIN_LIGHT"/>
    <property type="match status" value="4"/>
</dbReference>
<dbReference type="PROSITE" id="PS50005">
    <property type="entry name" value="TPR"/>
    <property type="match status" value="5"/>
</dbReference>
<dbReference type="PROSITE" id="PS50293">
    <property type="entry name" value="TPR_REGION"/>
    <property type="match status" value="2"/>
</dbReference>
<sequence>MSGSKLSTPNNSGGGQGNLSQEQIITGTREVIKGLEQLKNEHNDILNSLYQSLKMLKKDTPGDSNLVEEKTDIIEKSLESLELGLGEAKVMMALGHHLNMVEAEKQKLRAQVRRLVQENTWLRDELAATQQKLQTSEQNLADLEVKYKHLEYMNSIKKYDEDRTPDEEASSSDPLDLGFPEDDDGGQADESYPQPQTGSGSVSAAAGGYEIPARLRTLHNLVIQYASQSRYEVAVPLCKQALEDLEKTSGHDHPDVATMLNILALVYRDQNKYKEAGNLLHDALAIREKTLGPDHPAVAATLNNLAVLYGKRGKYKEAEPLCKRALEIREKVLGKDHPDVAKQLNNLALLCQNQGKYEEVEWYYQRALEIYEKKLGPDDPNVAKTKNNLAAAYLKQGKYKAAETLYKQVLTRAHEREFGLSADDKDNKPIWMQAEEREEKGKFKDNAPYGDYGGWHKAAKVDSRSRSSPTVTTTLKNLGALYRRQGKYDAAEILEECAMKSRRNALDMVRETKVRELLGQDLSTDVPRSEAMAKERHHRRSSGTPRHGSTESVSYEKTDGSEEVSIGVAWKAKRKAKDRSRSIPAGYVEIPRSPPHVLVENGDGKLRRSGSLSKLRASVRRSSTKLLNKLKGRESDDDGGMKRASSMSVLPSRGNDESTPAPIQLSQRGRVGSHDNLSSRRQSGNF</sequence>
<keyword id="KW-0025">Alternative splicing</keyword>
<keyword id="KW-0175">Coiled coil</keyword>
<keyword id="KW-0963">Cytoplasm</keyword>
<keyword id="KW-0206">Cytoskeleton</keyword>
<keyword id="KW-0493">Microtubule</keyword>
<keyword id="KW-0505">Motor protein</keyword>
<keyword id="KW-0597">Phosphoprotein</keyword>
<keyword id="KW-1185">Reference proteome</keyword>
<keyword id="KW-0677">Repeat</keyword>
<keyword id="KW-0802">TPR repeat</keyword>
<comment type="function">
    <text>Kinesin is a microtubule-associated force-producing protein that may play a role in organelle transport. The light chain may function in coupling of cargo to the heavy chain or in the modulation of its ATPase activity.</text>
</comment>
<comment type="subunit">
    <text>Oligomeric complex composed of two heavy chains and two light chains.</text>
</comment>
<comment type="subcellular location">
    <subcellularLocation>
        <location evidence="3">Cytoplasm</location>
        <location evidence="3">Cytoskeleton</location>
    </subcellularLocation>
</comment>
<comment type="alternative products">
    <event type="alternative splicing"/>
    <isoform>
        <id>Q05090-1</id>
        <name>KLC-3</name>
        <sequence type="displayed"/>
    </isoform>
    <isoform>
        <id>Q05090-2</id>
        <name>KLC-1</name>
        <sequence type="described" ref="VSP_002878"/>
    </isoform>
    <isoform>
        <id>Q05090-3</id>
        <name>KLC-2</name>
        <sequence type="described" ref="VSP_002877"/>
    </isoform>
    <isoform>
        <id>Q05090-4</id>
        <name>KLC-4</name>
        <sequence type="described" ref="VSP_002879 VSP_002880"/>
    </isoform>
    <text>Additional isoforms seem to exist.</text>
</comment>
<comment type="domain">
    <text>The light chain is composed of three structural domains: a large globular N-terminal domain which may be involved in binding to kinesin heavy chains, a central alpha-helical coiled-coil domain that mediates the light chain dimerization; and a small globular C-terminal which may play a role in regulating mechanochemical activity or attachment of kinesin to membrane-bound organelles.</text>
</comment>
<comment type="PTM">
    <text>Phosphorylation may modulate the process of mechanochemical coupling.</text>
</comment>
<comment type="similarity">
    <text evidence="3">Belongs to the kinesin light chain family.</text>
</comment>
<feature type="chain" id="PRO_0000215100" description="Kinesin light chain">
    <location>
        <begin position="1"/>
        <end position="686"/>
    </location>
</feature>
<feature type="repeat" description="TPR 1">
    <location>
        <begin position="215"/>
        <end position="248"/>
    </location>
</feature>
<feature type="repeat" description="TPR 2">
    <location>
        <begin position="257"/>
        <end position="290"/>
    </location>
</feature>
<feature type="repeat" description="TPR 3">
    <location>
        <begin position="299"/>
        <end position="332"/>
    </location>
</feature>
<feature type="repeat" description="TPR 4">
    <location>
        <begin position="341"/>
        <end position="374"/>
    </location>
</feature>
<feature type="repeat" description="TPR 5">
    <location>
        <begin position="383"/>
        <end position="416"/>
    </location>
</feature>
<feature type="repeat" description="TPR 6">
    <location>
        <begin position="472"/>
        <end position="505"/>
    </location>
</feature>
<feature type="region of interest" description="Disordered" evidence="1">
    <location>
        <begin position="1"/>
        <end position="23"/>
    </location>
</feature>
<feature type="region of interest" description="Disordered" evidence="1">
    <location>
        <begin position="158"/>
        <end position="204"/>
    </location>
</feature>
<feature type="region of interest" description="Disordered" evidence="1">
    <location>
        <begin position="520"/>
        <end position="558"/>
    </location>
</feature>
<feature type="region of interest" description="Disordered" evidence="1">
    <location>
        <begin position="586"/>
        <end position="686"/>
    </location>
</feature>
<feature type="coiled-coil region">
    <location>
        <begin position="20"/>
        <end position="160"/>
    </location>
</feature>
<feature type="compositionally biased region" description="Polar residues" evidence="1">
    <location>
        <begin position="675"/>
        <end position="686"/>
    </location>
</feature>
<feature type="splice variant" id="VSP_002879" description="In isoform KLC-4." evidence="2">
    <original>GKFKDNAPYGD</original>
    <variation>VKKRKPKPAKS</variation>
    <location>
        <begin position="441"/>
        <end position="451"/>
    </location>
</feature>
<feature type="splice variant" id="VSP_002880" description="In isoform KLC-4." evidence="2">
    <location>
        <begin position="452"/>
        <end position="686"/>
    </location>
</feature>
<feature type="splice variant" id="VSP_002878" description="In isoform KLC-1." evidence="2">
    <location>
        <begin position="564"/>
        <end position="600"/>
    </location>
</feature>
<feature type="splice variant" id="VSP_002877" description="In isoform KLC-2." evidence="2">
    <location>
        <begin position="564"/>
        <end position="572"/>
    </location>
</feature>